<keyword id="KW-0049">Antioxidant</keyword>
<keyword id="KW-1015">Disulfide bond</keyword>
<keyword id="KW-0560">Oxidoreductase</keyword>
<keyword id="KW-0575">Peroxidase</keyword>
<keyword id="KW-0676">Redox-active center</keyword>
<feature type="chain" id="PRO_0000187903" description="Thiol peroxidase">
    <location>
        <begin position="1"/>
        <end position="164"/>
    </location>
</feature>
<feature type="domain" description="Thioredoxin" evidence="1">
    <location>
        <begin position="18"/>
        <end position="163"/>
    </location>
</feature>
<feature type="active site" description="Cysteine sulfenic acid (-SOH) intermediate" evidence="1">
    <location>
        <position position="60"/>
    </location>
</feature>
<feature type="disulfide bond" description="Redox-active" evidence="1">
    <location>
        <begin position="60"/>
        <end position="93"/>
    </location>
</feature>
<accession>Q8NW51</accession>
<sequence>MTEITFKGGPIHLKGQQINEGDFAPDFTVLDNDLNQVTLADYAGKKKLISVVPSIDTGVCDQQTRKFNSDASKEEGIVLTISADLPFAQKRWCASAGLDNVITLSDHRDLSFGENYGVVMEELRLLARAVFVLDADNKVVYKEIVSEGTDFPDFDAALAAYKNI</sequence>
<name>TPX_STAAW</name>
<protein>
    <recommendedName>
        <fullName evidence="1">Thiol peroxidase</fullName>
        <shortName evidence="1">Tpx</shortName>
        <ecNumber evidence="1">1.11.1.24</ecNumber>
    </recommendedName>
    <alternativeName>
        <fullName evidence="1">Peroxiredoxin tpx</fullName>
        <shortName evidence="1">Prx</shortName>
    </alternativeName>
    <alternativeName>
        <fullName evidence="1">Thioredoxin peroxidase</fullName>
    </alternativeName>
    <alternativeName>
        <fullName evidence="1">Thioredoxin-dependent peroxiredoxin</fullName>
    </alternativeName>
</protein>
<evidence type="ECO:0000255" key="1">
    <source>
        <dbReference type="HAMAP-Rule" id="MF_00269"/>
    </source>
</evidence>
<proteinExistence type="inferred from homology"/>
<reference key="1">
    <citation type="journal article" date="2002" name="Lancet">
        <title>Genome and virulence determinants of high virulence community-acquired MRSA.</title>
        <authorList>
            <person name="Baba T."/>
            <person name="Takeuchi F."/>
            <person name="Kuroda M."/>
            <person name="Yuzawa H."/>
            <person name="Aoki K."/>
            <person name="Oguchi A."/>
            <person name="Nagai Y."/>
            <person name="Iwama N."/>
            <person name="Asano K."/>
            <person name="Naimi T."/>
            <person name="Kuroda H."/>
            <person name="Cui L."/>
            <person name="Yamamoto K."/>
            <person name="Hiramatsu K."/>
        </authorList>
    </citation>
    <scope>NUCLEOTIDE SEQUENCE [LARGE SCALE GENOMIC DNA]</scope>
    <source>
        <strain>MW2</strain>
    </source>
</reference>
<gene>
    <name evidence="1" type="primary">tpx</name>
    <name type="ordered locus">MW1656</name>
</gene>
<dbReference type="EC" id="1.11.1.24" evidence="1"/>
<dbReference type="EMBL" id="BA000033">
    <property type="protein sequence ID" value="BAB95521.1"/>
    <property type="molecule type" value="Genomic_DNA"/>
</dbReference>
<dbReference type="RefSeq" id="WP_000136253.1">
    <property type="nucleotide sequence ID" value="NC_003923.1"/>
</dbReference>
<dbReference type="SMR" id="Q8NW51"/>
<dbReference type="PeroxiBase" id="6010">
    <property type="entry name" value="SaurTPx_MW2"/>
</dbReference>
<dbReference type="KEGG" id="sam:MW1656"/>
<dbReference type="HOGENOM" id="CLU_042529_12_0_9"/>
<dbReference type="GO" id="GO:0008379">
    <property type="term" value="F:thioredoxin peroxidase activity"/>
    <property type="evidence" value="ECO:0007669"/>
    <property type="project" value="UniProtKB-UniRule"/>
</dbReference>
<dbReference type="CDD" id="cd03014">
    <property type="entry name" value="PRX_Atyp2cys"/>
    <property type="match status" value="1"/>
</dbReference>
<dbReference type="Gene3D" id="3.40.30.10">
    <property type="entry name" value="Glutaredoxin"/>
    <property type="match status" value="1"/>
</dbReference>
<dbReference type="HAMAP" id="MF_00269">
    <property type="entry name" value="Tpx"/>
    <property type="match status" value="1"/>
</dbReference>
<dbReference type="InterPro" id="IPR013740">
    <property type="entry name" value="Redoxin"/>
</dbReference>
<dbReference type="InterPro" id="IPR036249">
    <property type="entry name" value="Thioredoxin-like_sf"/>
</dbReference>
<dbReference type="InterPro" id="IPR013766">
    <property type="entry name" value="Thioredoxin_domain"/>
</dbReference>
<dbReference type="InterPro" id="IPR002065">
    <property type="entry name" value="TPX"/>
</dbReference>
<dbReference type="InterPro" id="IPR018219">
    <property type="entry name" value="Tpx_CS"/>
</dbReference>
<dbReference type="InterPro" id="IPR050455">
    <property type="entry name" value="Tpx_Peroxidase_subfamily"/>
</dbReference>
<dbReference type="NCBIfam" id="NF001808">
    <property type="entry name" value="PRK00522.1"/>
    <property type="match status" value="1"/>
</dbReference>
<dbReference type="PANTHER" id="PTHR43110">
    <property type="entry name" value="THIOL PEROXIDASE"/>
    <property type="match status" value="1"/>
</dbReference>
<dbReference type="PANTHER" id="PTHR43110:SF1">
    <property type="entry name" value="THIOL PEROXIDASE"/>
    <property type="match status" value="1"/>
</dbReference>
<dbReference type="Pfam" id="PF08534">
    <property type="entry name" value="Redoxin"/>
    <property type="match status" value="1"/>
</dbReference>
<dbReference type="SUPFAM" id="SSF52833">
    <property type="entry name" value="Thioredoxin-like"/>
    <property type="match status" value="1"/>
</dbReference>
<dbReference type="PROSITE" id="PS51352">
    <property type="entry name" value="THIOREDOXIN_2"/>
    <property type="match status" value="1"/>
</dbReference>
<dbReference type="PROSITE" id="PS01265">
    <property type="entry name" value="TPX"/>
    <property type="match status" value="1"/>
</dbReference>
<comment type="function">
    <text evidence="1">Thiol-specific peroxidase that catalyzes the reduction of hydrogen peroxide and organic hydroperoxides to water and alcohols, respectively. Plays a role in cell protection against oxidative stress by detoxifying peroxides.</text>
</comment>
<comment type="catalytic activity">
    <reaction evidence="1">
        <text>a hydroperoxide + [thioredoxin]-dithiol = an alcohol + [thioredoxin]-disulfide + H2O</text>
        <dbReference type="Rhea" id="RHEA:62620"/>
        <dbReference type="Rhea" id="RHEA-COMP:10698"/>
        <dbReference type="Rhea" id="RHEA-COMP:10700"/>
        <dbReference type="ChEBI" id="CHEBI:15377"/>
        <dbReference type="ChEBI" id="CHEBI:29950"/>
        <dbReference type="ChEBI" id="CHEBI:30879"/>
        <dbReference type="ChEBI" id="CHEBI:35924"/>
        <dbReference type="ChEBI" id="CHEBI:50058"/>
        <dbReference type="EC" id="1.11.1.24"/>
    </reaction>
</comment>
<comment type="subunit">
    <text evidence="1">Homodimer.</text>
</comment>
<comment type="miscellaneous">
    <text evidence="1">The active site is a conserved redox-active cysteine residue, the peroxidatic cysteine (C(P)), which makes the nucleophilic attack on the peroxide substrate. The peroxide oxidizes the C(P)-SH to cysteine sulfenic acid (C(P)-SOH), which then reacts with another cysteine residue, the resolving cysteine (C(R)), to form a disulfide bridge. The disulfide is subsequently reduced by an appropriate electron donor to complete the catalytic cycle. In this atypical 2-Cys peroxiredoxin, C(R) is present in the same subunit to form an intramolecular disulfide. The disulfide is subsequently reduced by thioredoxin.</text>
</comment>
<comment type="similarity">
    <text evidence="1">Belongs to the peroxiredoxin family. Tpx subfamily.</text>
</comment>
<organism>
    <name type="scientific">Staphylococcus aureus (strain MW2)</name>
    <dbReference type="NCBI Taxonomy" id="196620"/>
    <lineage>
        <taxon>Bacteria</taxon>
        <taxon>Bacillati</taxon>
        <taxon>Bacillota</taxon>
        <taxon>Bacilli</taxon>
        <taxon>Bacillales</taxon>
        <taxon>Staphylococcaceae</taxon>
        <taxon>Staphylococcus</taxon>
    </lineage>
</organism>